<comment type="subcellular location">
    <subcellularLocation>
        <location evidence="2">Membrane</location>
        <topology evidence="2">Single-pass membrane protein</topology>
    </subcellularLocation>
</comment>
<feature type="chain" id="PRO_0000174364" description="YbbR-like domain-containing protein BB_0009">
    <location>
        <begin position="1"/>
        <end position="334"/>
    </location>
</feature>
<feature type="transmembrane region" description="Helical" evidence="1">
    <location>
        <begin position="22"/>
        <end position="38"/>
    </location>
</feature>
<feature type="domain" description="YbbR-like 1">
    <location>
        <begin position="43"/>
        <end position="128"/>
    </location>
</feature>
<feature type="domain" description="YbbR-like 2">
    <location>
        <begin position="138"/>
        <end position="220"/>
    </location>
</feature>
<organism>
    <name type="scientific">Borreliella burgdorferi (strain ATCC 35210 / DSM 4680 / CIP 102532 / B31)</name>
    <name type="common">Borrelia burgdorferi</name>
    <dbReference type="NCBI Taxonomy" id="224326"/>
    <lineage>
        <taxon>Bacteria</taxon>
        <taxon>Pseudomonadati</taxon>
        <taxon>Spirochaetota</taxon>
        <taxon>Spirochaetia</taxon>
        <taxon>Spirochaetales</taxon>
        <taxon>Borreliaceae</taxon>
        <taxon>Borreliella</taxon>
    </lineage>
</organism>
<keyword id="KW-0472">Membrane</keyword>
<keyword id="KW-1185">Reference proteome</keyword>
<keyword id="KW-0677">Repeat</keyword>
<keyword id="KW-0812">Transmembrane</keyword>
<keyword id="KW-1133">Transmembrane helix</keyword>
<proteinExistence type="predicted"/>
<sequence length="334" mass="38543">MEIGKKIINIIKLLFDDWQNKAISILIAILMFVAFNFNKIESITTEKEFKIILNDQIALGKIPDFSKIKITIKVNKDDLKYLDLNKIILFIEASSIKIPGSYKLPIKIKNLNSIHIAEYKLSKTNVLLNLDNKVSKLVKIEPKFKLIEKDGKGEYFIAKYNILPENLLVYGPEQELKKINTIQTNVKEFDTRTLFVSDYLEVVPPNPLVMFEKSHVVVNIYLNKKYSNTTIKSPNLIFNNLKNGLEIKDKEKIINSENKMFVKIKTRLSEKQIKAHINNQNISLAFDLADIKTPGIYNIAANIILKENINETEIYDYEPKKIKLEIIESSEIKP</sequence>
<reference key="1">
    <citation type="journal article" date="1997" name="Nature">
        <title>Genomic sequence of a Lyme disease spirochaete, Borrelia burgdorferi.</title>
        <authorList>
            <person name="Fraser C.M."/>
            <person name="Casjens S."/>
            <person name="Huang W.M."/>
            <person name="Sutton G.G."/>
            <person name="Clayton R.A."/>
            <person name="Lathigra R."/>
            <person name="White O."/>
            <person name="Ketchum K.A."/>
            <person name="Dodson R.J."/>
            <person name="Hickey E.K."/>
            <person name="Gwinn M.L."/>
            <person name="Dougherty B.A."/>
            <person name="Tomb J.-F."/>
            <person name="Fleischmann R.D."/>
            <person name="Richardson D.L."/>
            <person name="Peterson J.D."/>
            <person name="Kerlavage A.R."/>
            <person name="Quackenbush J."/>
            <person name="Salzberg S.L."/>
            <person name="Hanson M."/>
            <person name="van Vugt R."/>
            <person name="Palmer N."/>
            <person name="Adams M.D."/>
            <person name="Gocayne J.D."/>
            <person name="Weidman J.F."/>
            <person name="Utterback T.R."/>
            <person name="Watthey L."/>
            <person name="McDonald L.A."/>
            <person name="Artiach P."/>
            <person name="Bowman C."/>
            <person name="Garland S.A."/>
            <person name="Fujii C."/>
            <person name="Cotton M.D."/>
            <person name="Horst K."/>
            <person name="Roberts K.M."/>
            <person name="Hatch B."/>
            <person name="Smith H.O."/>
            <person name="Venter J.C."/>
        </authorList>
    </citation>
    <scope>NUCLEOTIDE SEQUENCE [LARGE SCALE GENOMIC DNA]</scope>
    <source>
        <strain>ATCC 35210 / DSM 4680 / CIP 102532 / B31</strain>
    </source>
</reference>
<accession>O51042</accession>
<gene>
    <name type="ordered locus">BB_0009</name>
</gene>
<name>Y009_BORBU</name>
<evidence type="ECO:0000255" key="1"/>
<evidence type="ECO:0000305" key="2"/>
<protein>
    <recommendedName>
        <fullName>YbbR-like domain-containing protein BB_0009</fullName>
    </recommendedName>
</protein>
<dbReference type="EMBL" id="AE000783">
    <property type="protein sequence ID" value="AAC66403.1"/>
    <property type="molecule type" value="Genomic_DNA"/>
</dbReference>
<dbReference type="PIR" id="A70101">
    <property type="entry name" value="A70101"/>
</dbReference>
<dbReference type="RefSeq" id="NP_212143.1">
    <property type="nucleotide sequence ID" value="NC_001318.1"/>
</dbReference>
<dbReference type="RefSeq" id="WP_010889659.1">
    <property type="nucleotide sequence ID" value="NC_001318.1"/>
</dbReference>
<dbReference type="STRING" id="224326.BB_0009"/>
<dbReference type="PaxDb" id="224326-BB_0009"/>
<dbReference type="EnsemblBacteria" id="AAC66403">
    <property type="protein sequence ID" value="AAC66403"/>
    <property type="gene ID" value="BB_0009"/>
</dbReference>
<dbReference type="KEGG" id="bbu:BB_0009"/>
<dbReference type="PATRIC" id="fig|224326.49.peg.407"/>
<dbReference type="HOGENOM" id="CLU_833330_0_0_12"/>
<dbReference type="OrthoDB" id="350270at2"/>
<dbReference type="Proteomes" id="UP000001807">
    <property type="component" value="Chromosome"/>
</dbReference>
<dbReference type="GO" id="GO:0016020">
    <property type="term" value="C:membrane"/>
    <property type="evidence" value="ECO:0007669"/>
    <property type="project" value="UniProtKB-SubCell"/>
</dbReference>
<dbReference type="Gene3D" id="2.170.120.30">
    <property type="match status" value="1"/>
</dbReference>
<dbReference type="InterPro" id="IPR053154">
    <property type="entry name" value="c-di-AMP_regulator"/>
</dbReference>
<dbReference type="InterPro" id="IPR012505">
    <property type="entry name" value="YbbR"/>
</dbReference>
<dbReference type="PANTHER" id="PTHR37804">
    <property type="entry name" value="CDAA REGULATORY PROTEIN CDAR"/>
    <property type="match status" value="1"/>
</dbReference>
<dbReference type="PANTHER" id="PTHR37804:SF1">
    <property type="entry name" value="CDAA REGULATORY PROTEIN CDAR"/>
    <property type="match status" value="1"/>
</dbReference>
<dbReference type="Pfam" id="PF07949">
    <property type="entry name" value="YbbR"/>
    <property type="match status" value="1"/>
</dbReference>